<gene>
    <name evidence="1" type="primary">gatB</name>
    <name type="ordered locus">NMB1358</name>
</gene>
<reference key="1">
    <citation type="journal article" date="2000" name="Science">
        <title>Complete genome sequence of Neisseria meningitidis serogroup B strain MC58.</title>
        <authorList>
            <person name="Tettelin H."/>
            <person name="Saunders N.J."/>
            <person name="Heidelberg J.F."/>
            <person name="Jeffries A.C."/>
            <person name="Nelson K.E."/>
            <person name="Eisen J.A."/>
            <person name="Ketchum K.A."/>
            <person name="Hood D.W."/>
            <person name="Peden J.F."/>
            <person name="Dodson R.J."/>
            <person name="Nelson W.C."/>
            <person name="Gwinn M.L."/>
            <person name="DeBoy R.T."/>
            <person name="Peterson J.D."/>
            <person name="Hickey E.K."/>
            <person name="Haft D.H."/>
            <person name="Salzberg S.L."/>
            <person name="White O."/>
            <person name="Fleischmann R.D."/>
            <person name="Dougherty B.A."/>
            <person name="Mason T.M."/>
            <person name="Ciecko A."/>
            <person name="Parksey D.S."/>
            <person name="Blair E."/>
            <person name="Cittone H."/>
            <person name="Clark E.B."/>
            <person name="Cotton M.D."/>
            <person name="Utterback T.R."/>
            <person name="Khouri H.M."/>
            <person name="Qin H."/>
            <person name="Vamathevan J.J."/>
            <person name="Gill J."/>
            <person name="Scarlato V."/>
            <person name="Masignani V."/>
            <person name="Pizza M."/>
            <person name="Grandi G."/>
            <person name="Sun L."/>
            <person name="Smith H.O."/>
            <person name="Fraser C.M."/>
            <person name="Moxon E.R."/>
            <person name="Rappuoli R."/>
            <person name="Venter J.C."/>
        </authorList>
    </citation>
    <scope>NUCLEOTIDE SEQUENCE [LARGE SCALE GENOMIC DNA]</scope>
    <source>
        <strain>ATCC BAA-335 / MC58</strain>
    </source>
</reference>
<comment type="function">
    <text evidence="1">Allows the formation of correctly charged Asn-tRNA(Asn) or Gln-tRNA(Gln) through the transamidation of misacylated Asp-tRNA(Asn) or Glu-tRNA(Gln) in organisms which lack either or both of asparaginyl-tRNA or glutaminyl-tRNA synthetases. The reaction takes place in the presence of glutamine and ATP through an activated phospho-Asp-tRNA(Asn) or phospho-Glu-tRNA(Gln).</text>
</comment>
<comment type="catalytic activity">
    <reaction evidence="1">
        <text>L-glutamyl-tRNA(Gln) + L-glutamine + ATP + H2O = L-glutaminyl-tRNA(Gln) + L-glutamate + ADP + phosphate + H(+)</text>
        <dbReference type="Rhea" id="RHEA:17521"/>
        <dbReference type="Rhea" id="RHEA-COMP:9681"/>
        <dbReference type="Rhea" id="RHEA-COMP:9684"/>
        <dbReference type="ChEBI" id="CHEBI:15377"/>
        <dbReference type="ChEBI" id="CHEBI:15378"/>
        <dbReference type="ChEBI" id="CHEBI:29985"/>
        <dbReference type="ChEBI" id="CHEBI:30616"/>
        <dbReference type="ChEBI" id="CHEBI:43474"/>
        <dbReference type="ChEBI" id="CHEBI:58359"/>
        <dbReference type="ChEBI" id="CHEBI:78520"/>
        <dbReference type="ChEBI" id="CHEBI:78521"/>
        <dbReference type="ChEBI" id="CHEBI:456216"/>
    </reaction>
</comment>
<comment type="catalytic activity">
    <reaction evidence="1">
        <text>L-aspartyl-tRNA(Asn) + L-glutamine + ATP + H2O = L-asparaginyl-tRNA(Asn) + L-glutamate + ADP + phosphate + 2 H(+)</text>
        <dbReference type="Rhea" id="RHEA:14513"/>
        <dbReference type="Rhea" id="RHEA-COMP:9674"/>
        <dbReference type="Rhea" id="RHEA-COMP:9677"/>
        <dbReference type="ChEBI" id="CHEBI:15377"/>
        <dbReference type="ChEBI" id="CHEBI:15378"/>
        <dbReference type="ChEBI" id="CHEBI:29985"/>
        <dbReference type="ChEBI" id="CHEBI:30616"/>
        <dbReference type="ChEBI" id="CHEBI:43474"/>
        <dbReference type="ChEBI" id="CHEBI:58359"/>
        <dbReference type="ChEBI" id="CHEBI:78515"/>
        <dbReference type="ChEBI" id="CHEBI:78516"/>
        <dbReference type="ChEBI" id="CHEBI:456216"/>
    </reaction>
</comment>
<comment type="subunit">
    <text evidence="1">Heterotrimer of A, B and C subunits.</text>
</comment>
<comment type="similarity">
    <text evidence="1">Belongs to the GatB/GatE family. GatB subfamily.</text>
</comment>
<dbReference type="EC" id="6.3.5.-" evidence="1"/>
<dbReference type="EMBL" id="AE002098">
    <property type="protein sequence ID" value="AAF41732.1"/>
    <property type="molecule type" value="Genomic_DNA"/>
</dbReference>
<dbReference type="PIR" id="G81091">
    <property type="entry name" value="G81091"/>
</dbReference>
<dbReference type="RefSeq" id="NP_274376.1">
    <property type="nucleotide sequence ID" value="NC_003112.2"/>
</dbReference>
<dbReference type="RefSeq" id="WP_002225147.1">
    <property type="nucleotide sequence ID" value="NC_003112.2"/>
</dbReference>
<dbReference type="SMR" id="Q9JYZ7"/>
<dbReference type="STRING" id="122586.NMB1358"/>
<dbReference type="PaxDb" id="122586-NMB1358"/>
<dbReference type="KEGG" id="nme:NMB1358"/>
<dbReference type="PATRIC" id="fig|122586.8.peg.1698"/>
<dbReference type="HOGENOM" id="CLU_019240_0_0_4"/>
<dbReference type="InParanoid" id="Q9JYZ7"/>
<dbReference type="OrthoDB" id="9804078at2"/>
<dbReference type="Proteomes" id="UP000000425">
    <property type="component" value="Chromosome"/>
</dbReference>
<dbReference type="GO" id="GO:0050566">
    <property type="term" value="F:asparaginyl-tRNA synthase (glutamine-hydrolyzing) activity"/>
    <property type="evidence" value="ECO:0007669"/>
    <property type="project" value="RHEA"/>
</dbReference>
<dbReference type="GO" id="GO:0005524">
    <property type="term" value="F:ATP binding"/>
    <property type="evidence" value="ECO:0007669"/>
    <property type="project" value="UniProtKB-KW"/>
</dbReference>
<dbReference type="GO" id="GO:0050567">
    <property type="term" value="F:glutaminyl-tRNA synthase (glutamine-hydrolyzing) activity"/>
    <property type="evidence" value="ECO:0000318"/>
    <property type="project" value="GO_Central"/>
</dbReference>
<dbReference type="GO" id="GO:0070681">
    <property type="term" value="P:glutaminyl-tRNAGln biosynthesis via transamidation"/>
    <property type="evidence" value="ECO:0000318"/>
    <property type="project" value="GO_Central"/>
</dbReference>
<dbReference type="GO" id="GO:0006412">
    <property type="term" value="P:translation"/>
    <property type="evidence" value="ECO:0007669"/>
    <property type="project" value="UniProtKB-UniRule"/>
</dbReference>
<dbReference type="FunFam" id="1.10.10.410:FF:000001">
    <property type="entry name" value="Aspartyl/glutamyl-tRNA(Asn/Gln) amidotransferase subunit B"/>
    <property type="match status" value="1"/>
</dbReference>
<dbReference type="FunFam" id="1.10.150.380:FF:000001">
    <property type="entry name" value="Aspartyl/glutamyl-tRNA(Asn/Gln) amidotransferase subunit B"/>
    <property type="match status" value="1"/>
</dbReference>
<dbReference type="Gene3D" id="1.10.10.410">
    <property type="match status" value="1"/>
</dbReference>
<dbReference type="Gene3D" id="1.10.150.380">
    <property type="entry name" value="GatB domain, N-terminal subdomain"/>
    <property type="match status" value="1"/>
</dbReference>
<dbReference type="HAMAP" id="MF_00121">
    <property type="entry name" value="GatB"/>
    <property type="match status" value="1"/>
</dbReference>
<dbReference type="InterPro" id="IPR017959">
    <property type="entry name" value="Asn/Gln-tRNA_amidoTrfase_suB/E"/>
</dbReference>
<dbReference type="InterPro" id="IPR006075">
    <property type="entry name" value="Asn/Gln-tRNA_Trfase_suB/E_cat"/>
</dbReference>
<dbReference type="InterPro" id="IPR018027">
    <property type="entry name" value="Asn/Gln_amidotransferase"/>
</dbReference>
<dbReference type="InterPro" id="IPR003789">
    <property type="entry name" value="Asn/Gln_tRNA_amidoTrase-B-like"/>
</dbReference>
<dbReference type="InterPro" id="IPR004413">
    <property type="entry name" value="GatB"/>
</dbReference>
<dbReference type="InterPro" id="IPR042114">
    <property type="entry name" value="GatB_C_1"/>
</dbReference>
<dbReference type="InterPro" id="IPR023168">
    <property type="entry name" value="GatB_Yqey_C_2"/>
</dbReference>
<dbReference type="InterPro" id="IPR017958">
    <property type="entry name" value="Gln-tRNA_amidoTrfase_suB_CS"/>
</dbReference>
<dbReference type="InterPro" id="IPR014746">
    <property type="entry name" value="Gln_synth/guanido_kin_cat_dom"/>
</dbReference>
<dbReference type="NCBIfam" id="TIGR00133">
    <property type="entry name" value="gatB"/>
    <property type="match status" value="1"/>
</dbReference>
<dbReference type="NCBIfam" id="NF004012">
    <property type="entry name" value="PRK05477.1-2"/>
    <property type="match status" value="1"/>
</dbReference>
<dbReference type="NCBIfam" id="NF004014">
    <property type="entry name" value="PRK05477.1-4"/>
    <property type="match status" value="1"/>
</dbReference>
<dbReference type="NCBIfam" id="NF004015">
    <property type="entry name" value="PRK05477.1-5"/>
    <property type="match status" value="1"/>
</dbReference>
<dbReference type="PANTHER" id="PTHR11659">
    <property type="entry name" value="GLUTAMYL-TRNA GLN AMIDOTRANSFERASE SUBUNIT B MITOCHONDRIAL AND PROKARYOTIC PET112-RELATED"/>
    <property type="match status" value="1"/>
</dbReference>
<dbReference type="PANTHER" id="PTHR11659:SF0">
    <property type="entry name" value="GLUTAMYL-TRNA(GLN) AMIDOTRANSFERASE SUBUNIT B, MITOCHONDRIAL"/>
    <property type="match status" value="1"/>
</dbReference>
<dbReference type="Pfam" id="PF02934">
    <property type="entry name" value="GatB_N"/>
    <property type="match status" value="1"/>
</dbReference>
<dbReference type="Pfam" id="PF02637">
    <property type="entry name" value="GatB_Yqey"/>
    <property type="match status" value="1"/>
</dbReference>
<dbReference type="SMART" id="SM00845">
    <property type="entry name" value="GatB_Yqey"/>
    <property type="match status" value="1"/>
</dbReference>
<dbReference type="SUPFAM" id="SSF89095">
    <property type="entry name" value="GatB/YqeY motif"/>
    <property type="match status" value="1"/>
</dbReference>
<dbReference type="SUPFAM" id="SSF55931">
    <property type="entry name" value="Glutamine synthetase/guanido kinase"/>
    <property type="match status" value="1"/>
</dbReference>
<dbReference type="PROSITE" id="PS01234">
    <property type="entry name" value="GATB"/>
    <property type="match status" value="1"/>
</dbReference>
<keyword id="KW-0067">ATP-binding</keyword>
<keyword id="KW-0436">Ligase</keyword>
<keyword id="KW-0547">Nucleotide-binding</keyword>
<keyword id="KW-0648">Protein biosynthesis</keyword>
<keyword id="KW-1185">Reference proteome</keyword>
<accession>Q9JYZ7</accession>
<evidence type="ECO:0000255" key="1">
    <source>
        <dbReference type="HAMAP-Rule" id="MF_00121"/>
    </source>
</evidence>
<name>GATB_NEIMB</name>
<feature type="chain" id="PRO_0000148817" description="Aspartyl/glutamyl-tRNA(Asn/Gln) amidotransferase subunit B">
    <location>
        <begin position="1"/>
        <end position="476"/>
    </location>
</feature>
<sequence length="476" mass="51911">MTWETVIGLEIHVQLNTKSKIFSGASTAFGAEPNAHASVVECALPGVLPVMNREVVEKAIKLGLALDAKINQKNVFDRKNYFYPDLPKGYQISQLDLPIVEHGKLEIVVGDDVKTINVTRAHMEEDAGKSVHEGLNGATGIDLNRAGTPLLEVVSEPEMRSAAEAVAYAKALHSLVTWLDICDGNMAEGSFRVDANVSVRPKGQEEFGTRREIKNLNSFRFLEQAINYEAEAQIEILEDGGKVQQATMLFDPEKGETRVMRLKEDAHDYRYFPDPDLLPVIISDAQMQKAKAEMPELPKEMAARFVADYGVSEYDARLLTASRAQAAYFEEAAKESGQGKLTANWMNGELAAALNKEGMELADSPITAPRLAALVGKIADGTLSSKLAKKAFEAMWAEPEATIAEIIEKHGLQQMTDTGEIEAMVDEVLANNAKAVEQFKSGNEKALNAIVGQVMKASKGKANPAQVQELIKAKLA</sequence>
<protein>
    <recommendedName>
        <fullName evidence="1">Aspartyl/glutamyl-tRNA(Asn/Gln) amidotransferase subunit B</fullName>
        <shortName evidence="1">Asp/Glu-ADT subunit B</shortName>
        <ecNumber evidence="1">6.3.5.-</ecNumber>
    </recommendedName>
</protein>
<organism>
    <name type="scientific">Neisseria meningitidis serogroup B (strain ATCC BAA-335 / MC58)</name>
    <dbReference type="NCBI Taxonomy" id="122586"/>
    <lineage>
        <taxon>Bacteria</taxon>
        <taxon>Pseudomonadati</taxon>
        <taxon>Pseudomonadota</taxon>
        <taxon>Betaproteobacteria</taxon>
        <taxon>Neisseriales</taxon>
        <taxon>Neisseriaceae</taxon>
        <taxon>Neisseria</taxon>
    </lineage>
</organism>
<proteinExistence type="inferred from homology"/>